<proteinExistence type="inferred from homology"/>
<feature type="chain" id="PRO_1000192451" description="Transcription antitermination protein NusB">
    <location>
        <begin position="1"/>
        <end position="142"/>
    </location>
</feature>
<protein>
    <recommendedName>
        <fullName evidence="1">Transcription antitermination protein NusB</fullName>
    </recommendedName>
    <alternativeName>
        <fullName evidence="1">Antitermination factor NusB</fullName>
    </alternativeName>
</protein>
<reference key="1">
    <citation type="journal article" date="2009" name="J. Bacteriol.">
        <title>Complete and draft genome sequences of six members of the Aquificales.</title>
        <authorList>
            <person name="Reysenbach A.-L."/>
            <person name="Hamamura N."/>
            <person name="Podar M."/>
            <person name="Griffiths E."/>
            <person name="Ferreira S."/>
            <person name="Hochstein R."/>
            <person name="Heidelberg J."/>
            <person name="Johnson J."/>
            <person name="Mead D."/>
            <person name="Pohorille A."/>
            <person name="Sarmiento M."/>
            <person name="Schweighofer K."/>
            <person name="Seshadri R."/>
            <person name="Voytek M.A."/>
        </authorList>
    </citation>
    <scope>NUCLEOTIDE SEQUENCE [LARGE SCALE GENOMIC DNA]</scope>
    <source>
        <strain>DSM 14350 / EX-H1</strain>
    </source>
</reference>
<gene>
    <name evidence="1" type="primary">nusB</name>
    <name type="ordered locus">PERMA_0062</name>
</gene>
<sequence>MGKYRKKAREIVFRTLYTYDIKGGDLFEIMEDHIKDIRGKLSKKTVDYIYSILKGIDEHLPEIDDILRENLKNWRLERLGYPERALLRLGVYELLFSDIEDKGRVFMDILDLTKCYIDNPDTVKFINGVLSTVYKNRQKVNQ</sequence>
<dbReference type="EMBL" id="CP001230">
    <property type="protein sequence ID" value="ACO03795.1"/>
    <property type="molecule type" value="Genomic_DNA"/>
</dbReference>
<dbReference type="RefSeq" id="WP_012676034.1">
    <property type="nucleotide sequence ID" value="NC_012440.1"/>
</dbReference>
<dbReference type="SMR" id="C0QT45"/>
<dbReference type="STRING" id="123214.PERMA_0062"/>
<dbReference type="PaxDb" id="123214-PERMA_0062"/>
<dbReference type="KEGG" id="pmx:PERMA_0062"/>
<dbReference type="eggNOG" id="COG0781">
    <property type="taxonomic scope" value="Bacteria"/>
</dbReference>
<dbReference type="HOGENOM" id="CLU_087843_3_1_0"/>
<dbReference type="OrthoDB" id="9797817at2"/>
<dbReference type="Proteomes" id="UP000001366">
    <property type="component" value="Chromosome"/>
</dbReference>
<dbReference type="GO" id="GO:0005829">
    <property type="term" value="C:cytosol"/>
    <property type="evidence" value="ECO:0007669"/>
    <property type="project" value="TreeGrafter"/>
</dbReference>
<dbReference type="GO" id="GO:0003723">
    <property type="term" value="F:RNA binding"/>
    <property type="evidence" value="ECO:0007669"/>
    <property type="project" value="UniProtKB-UniRule"/>
</dbReference>
<dbReference type="GO" id="GO:0006353">
    <property type="term" value="P:DNA-templated transcription termination"/>
    <property type="evidence" value="ECO:0007669"/>
    <property type="project" value="UniProtKB-UniRule"/>
</dbReference>
<dbReference type="GO" id="GO:0031564">
    <property type="term" value="P:transcription antitermination"/>
    <property type="evidence" value="ECO:0007669"/>
    <property type="project" value="UniProtKB-KW"/>
</dbReference>
<dbReference type="Gene3D" id="1.10.940.10">
    <property type="entry name" value="NusB-like"/>
    <property type="match status" value="1"/>
</dbReference>
<dbReference type="HAMAP" id="MF_00073">
    <property type="entry name" value="NusB"/>
    <property type="match status" value="1"/>
</dbReference>
<dbReference type="InterPro" id="IPR035926">
    <property type="entry name" value="NusB-like_sf"/>
</dbReference>
<dbReference type="InterPro" id="IPR011605">
    <property type="entry name" value="NusB_fam"/>
</dbReference>
<dbReference type="InterPro" id="IPR006027">
    <property type="entry name" value="NusB_RsmB_TIM44"/>
</dbReference>
<dbReference type="NCBIfam" id="TIGR01951">
    <property type="entry name" value="nusB"/>
    <property type="match status" value="1"/>
</dbReference>
<dbReference type="PANTHER" id="PTHR11078:SF3">
    <property type="entry name" value="ANTITERMINATION NUSB DOMAIN-CONTAINING PROTEIN"/>
    <property type="match status" value="1"/>
</dbReference>
<dbReference type="PANTHER" id="PTHR11078">
    <property type="entry name" value="N UTILIZATION SUBSTANCE PROTEIN B-RELATED"/>
    <property type="match status" value="1"/>
</dbReference>
<dbReference type="Pfam" id="PF01029">
    <property type="entry name" value="NusB"/>
    <property type="match status" value="1"/>
</dbReference>
<dbReference type="SUPFAM" id="SSF48013">
    <property type="entry name" value="NusB-like"/>
    <property type="match status" value="1"/>
</dbReference>
<evidence type="ECO:0000255" key="1">
    <source>
        <dbReference type="HAMAP-Rule" id="MF_00073"/>
    </source>
</evidence>
<keyword id="KW-1185">Reference proteome</keyword>
<keyword id="KW-0694">RNA-binding</keyword>
<keyword id="KW-0804">Transcription</keyword>
<keyword id="KW-0889">Transcription antitermination</keyword>
<keyword id="KW-0805">Transcription regulation</keyword>
<organism>
    <name type="scientific">Persephonella marina (strain DSM 14350 / EX-H1)</name>
    <dbReference type="NCBI Taxonomy" id="123214"/>
    <lineage>
        <taxon>Bacteria</taxon>
        <taxon>Pseudomonadati</taxon>
        <taxon>Aquificota</taxon>
        <taxon>Aquificia</taxon>
        <taxon>Aquificales</taxon>
        <taxon>Hydrogenothermaceae</taxon>
        <taxon>Persephonella</taxon>
    </lineage>
</organism>
<comment type="function">
    <text evidence="1">Involved in transcription antitermination. Required for transcription of ribosomal RNA (rRNA) genes. Binds specifically to the boxA antiterminator sequence of the ribosomal RNA (rrn) operons.</text>
</comment>
<comment type="similarity">
    <text evidence="1">Belongs to the NusB family.</text>
</comment>
<accession>C0QT45</accession>
<name>NUSB_PERMH</name>